<comment type="function">
    <text evidence="1">Catalyzes the cyclization of GTP to (8S)-3',8-cyclo-7,8-dihydroguanosine 5'-triphosphate.</text>
</comment>
<comment type="catalytic activity">
    <reaction evidence="1">
        <text>GTP + AH2 + S-adenosyl-L-methionine = (8S)-3',8-cyclo-7,8-dihydroguanosine 5'-triphosphate + 5'-deoxyadenosine + L-methionine + A + H(+)</text>
        <dbReference type="Rhea" id="RHEA:49576"/>
        <dbReference type="ChEBI" id="CHEBI:13193"/>
        <dbReference type="ChEBI" id="CHEBI:15378"/>
        <dbReference type="ChEBI" id="CHEBI:17319"/>
        <dbReference type="ChEBI" id="CHEBI:17499"/>
        <dbReference type="ChEBI" id="CHEBI:37565"/>
        <dbReference type="ChEBI" id="CHEBI:57844"/>
        <dbReference type="ChEBI" id="CHEBI:59789"/>
        <dbReference type="ChEBI" id="CHEBI:131766"/>
        <dbReference type="EC" id="4.1.99.22"/>
    </reaction>
</comment>
<comment type="cofactor">
    <cofactor evidence="1">
        <name>[4Fe-4S] cluster</name>
        <dbReference type="ChEBI" id="CHEBI:49883"/>
    </cofactor>
    <text evidence="1">Binds 2 [4Fe-4S] clusters. Binds 1 [4Fe-4S] cluster coordinated with 3 cysteines and an exchangeable S-adenosyl-L-methionine and 1 [4Fe-4S] cluster coordinated with 3 cysteines and the GTP-derived substrate.</text>
</comment>
<comment type="pathway">
    <text evidence="1">Cofactor biosynthesis; molybdopterin biosynthesis.</text>
</comment>
<comment type="subunit">
    <text evidence="1">Monomer and homodimer.</text>
</comment>
<comment type="similarity">
    <text evidence="1">Belongs to the radical SAM superfamily. MoaA family.</text>
</comment>
<keyword id="KW-0004">4Fe-4S</keyword>
<keyword id="KW-0342">GTP-binding</keyword>
<keyword id="KW-0408">Iron</keyword>
<keyword id="KW-0411">Iron-sulfur</keyword>
<keyword id="KW-0456">Lyase</keyword>
<keyword id="KW-0479">Metal-binding</keyword>
<keyword id="KW-0501">Molybdenum cofactor biosynthesis</keyword>
<keyword id="KW-0547">Nucleotide-binding</keyword>
<keyword id="KW-1185">Reference proteome</keyword>
<keyword id="KW-0949">S-adenosyl-L-methionine</keyword>
<sequence length="361" mass="38499">MTVTALGLPTVARSTGDGSAGASPAPADGPLVDTYGRAATDLRVSLTDRCNLRCTYCMPAEGLNWLPGDALLSPTELARLLRIAVARLGITSVRFTGGEPLVVRHLEEVVAAAAALEPRPEITLTTNGLGLARRAEGLKKAGLNRINVSLDSVDAAHFARITRRDRLPDVLAGLAAAKAAGLEPVKVNAVLDPVSGLDDAVELLRYCLQHGYQLRIIEQMPLDASHSWQRDNVIDADRILQTLQQHFELTPDSRPRGSAPAELWQVAEGPTHAAGTVGVIASVSHAFCSACDRTRLTADGQIRSCLFSREETDLRHLLRGGADDAEIEAAWRAAMWSKPAGHGINDPDFVQPVRPMSAIGG</sequence>
<gene>
    <name evidence="1" type="primary">moaA</name>
    <name type="ordered locus">MSMEG_5698</name>
    <name type="ordered locus">MSMEI_5547</name>
</gene>
<organism>
    <name type="scientific">Mycolicibacterium smegmatis (strain ATCC 700084 / mc(2)155)</name>
    <name type="common">Mycobacterium smegmatis</name>
    <dbReference type="NCBI Taxonomy" id="246196"/>
    <lineage>
        <taxon>Bacteria</taxon>
        <taxon>Bacillati</taxon>
        <taxon>Actinomycetota</taxon>
        <taxon>Actinomycetes</taxon>
        <taxon>Mycobacteriales</taxon>
        <taxon>Mycobacteriaceae</taxon>
        <taxon>Mycolicibacterium</taxon>
    </lineage>
</organism>
<name>MOAA_MYCS2</name>
<accession>A0R443</accession>
<accession>I7G8K9</accession>
<reference key="1">
    <citation type="submission" date="2006-10" db="EMBL/GenBank/DDBJ databases">
        <authorList>
            <person name="Fleischmann R.D."/>
            <person name="Dodson R.J."/>
            <person name="Haft D.H."/>
            <person name="Merkel J.S."/>
            <person name="Nelson W.C."/>
            <person name="Fraser C.M."/>
        </authorList>
    </citation>
    <scope>NUCLEOTIDE SEQUENCE [LARGE SCALE GENOMIC DNA]</scope>
    <source>
        <strain>ATCC 700084 / mc(2)155</strain>
    </source>
</reference>
<reference key="2">
    <citation type="journal article" date="2007" name="Genome Biol.">
        <title>Interrupted coding sequences in Mycobacterium smegmatis: authentic mutations or sequencing errors?</title>
        <authorList>
            <person name="Deshayes C."/>
            <person name="Perrodou E."/>
            <person name="Gallien S."/>
            <person name="Euphrasie D."/>
            <person name="Schaeffer C."/>
            <person name="Van-Dorsselaer A."/>
            <person name="Poch O."/>
            <person name="Lecompte O."/>
            <person name="Reyrat J.-M."/>
        </authorList>
    </citation>
    <scope>NUCLEOTIDE SEQUENCE [LARGE SCALE GENOMIC DNA]</scope>
    <source>
        <strain>ATCC 700084 / mc(2)155</strain>
    </source>
</reference>
<reference key="3">
    <citation type="journal article" date="2009" name="Genome Res.">
        <title>Ortho-proteogenomics: multiple proteomes investigation through orthology and a new MS-based protocol.</title>
        <authorList>
            <person name="Gallien S."/>
            <person name="Perrodou E."/>
            <person name="Carapito C."/>
            <person name="Deshayes C."/>
            <person name="Reyrat J.-M."/>
            <person name="Van Dorsselaer A."/>
            <person name="Poch O."/>
            <person name="Schaeffer C."/>
            <person name="Lecompte O."/>
        </authorList>
    </citation>
    <scope>NUCLEOTIDE SEQUENCE [LARGE SCALE GENOMIC DNA]</scope>
    <source>
        <strain>ATCC 700084 / mc(2)155</strain>
    </source>
</reference>
<feature type="chain" id="PRO_1000054201" description="GTP 3',8-cyclase">
    <location>
        <begin position="1"/>
        <end position="361"/>
    </location>
</feature>
<feature type="domain" description="Radical SAM core" evidence="2">
    <location>
        <begin position="34"/>
        <end position="252"/>
    </location>
</feature>
<feature type="region of interest" description="Disordered" evidence="3">
    <location>
        <begin position="1"/>
        <end position="30"/>
    </location>
</feature>
<feature type="compositionally biased region" description="Low complexity" evidence="3">
    <location>
        <begin position="16"/>
        <end position="30"/>
    </location>
</feature>
<feature type="binding site" evidence="1">
    <location>
        <position position="43"/>
    </location>
    <ligand>
        <name>GTP</name>
        <dbReference type="ChEBI" id="CHEBI:37565"/>
    </ligand>
</feature>
<feature type="binding site" evidence="1">
    <location>
        <position position="50"/>
    </location>
    <ligand>
        <name>[4Fe-4S] cluster</name>
        <dbReference type="ChEBI" id="CHEBI:49883"/>
        <label>1</label>
        <note>4Fe-4S-S-AdoMet</note>
    </ligand>
</feature>
<feature type="binding site" evidence="1">
    <location>
        <position position="54"/>
    </location>
    <ligand>
        <name>[4Fe-4S] cluster</name>
        <dbReference type="ChEBI" id="CHEBI:49883"/>
        <label>1</label>
        <note>4Fe-4S-S-AdoMet</note>
    </ligand>
</feature>
<feature type="binding site" evidence="1">
    <location>
        <position position="56"/>
    </location>
    <ligand>
        <name>S-adenosyl-L-methionine</name>
        <dbReference type="ChEBI" id="CHEBI:59789"/>
    </ligand>
</feature>
<feature type="binding site" evidence="1">
    <location>
        <position position="57"/>
    </location>
    <ligand>
        <name>[4Fe-4S] cluster</name>
        <dbReference type="ChEBI" id="CHEBI:49883"/>
        <label>1</label>
        <note>4Fe-4S-S-AdoMet</note>
    </ligand>
</feature>
<feature type="binding site" evidence="1">
    <location>
        <position position="94"/>
    </location>
    <ligand>
        <name>GTP</name>
        <dbReference type="ChEBI" id="CHEBI:37565"/>
    </ligand>
</feature>
<feature type="binding site" evidence="1">
    <location>
        <position position="98"/>
    </location>
    <ligand>
        <name>S-adenosyl-L-methionine</name>
        <dbReference type="ChEBI" id="CHEBI:59789"/>
    </ligand>
</feature>
<feature type="binding site" evidence="1">
    <location>
        <position position="125"/>
    </location>
    <ligand>
        <name>GTP</name>
        <dbReference type="ChEBI" id="CHEBI:37565"/>
    </ligand>
</feature>
<feature type="binding site" evidence="1">
    <location>
        <position position="149"/>
    </location>
    <ligand>
        <name>S-adenosyl-L-methionine</name>
        <dbReference type="ChEBI" id="CHEBI:59789"/>
    </ligand>
</feature>
<feature type="binding site" evidence="1">
    <location>
        <position position="186"/>
    </location>
    <ligand>
        <name>GTP</name>
        <dbReference type="ChEBI" id="CHEBI:37565"/>
    </ligand>
</feature>
<feature type="binding site" evidence="1">
    <location>
        <position position="220"/>
    </location>
    <ligand>
        <name>S-adenosyl-L-methionine</name>
        <dbReference type="ChEBI" id="CHEBI:59789"/>
    </ligand>
</feature>
<feature type="binding site" evidence="1">
    <location>
        <position position="288"/>
    </location>
    <ligand>
        <name>[4Fe-4S] cluster</name>
        <dbReference type="ChEBI" id="CHEBI:49883"/>
        <label>2</label>
        <note>4Fe-4S-substrate</note>
    </ligand>
</feature>
<feature type="binding site" evidence="1">
    <location>
        <position position="291"/>
    </location>
    <ligand>
        <name>[4Fe-4S] cluster</name>
        <dbReference type="ChEBI" id="CHEBI:49883"/>
        <label>2</label>
        <note>4Fe-4S-substrate</note>
    </ligand>
</feature>
<feature type="binding site" evidence="1">
    <location>
        <begin position="293"/>
        <end position="295"/>
    </location>
    <ligand>
        <name>GTP</name>
        <dbReference type="ChEBI" id="CHEBI:37565"/>
    </ligand>
</feature>
<feature type="binding site" evidence="1">
    <location>
        <position position="305"/>
    </location>
    <ligand>
        <name>[4Fe-4S] cluster</name>
        <dbReference type="ChEBI" id="CHEBI:49883"/>
        <label>2</label>
        <note>4Fe-4S-substrate</note>
    </ligand>
</feature>
<protein>
    <recommendedName>
        <fullName evidence="1">GTP 3',8-cyclase</fullName>
        <ecNumber evidence="1">4.1.99.22</ecNumber>
    </recommendedName>
    <alternativeName>
        <fullName evidence="1">Molybdenum cofactor biosynthesis protein A</fullName>
    </alternativeName>
</protein>
<dbReference type="EC" id="4.1.99.22" evidence="1"/>
<dbReference type="EMBL" id="CP000480">
    <property type="protein sequence ID" value="ABK75854.1"/>
    <property type="molecule type" value="Genomic_DNA"/>
</dbReference>
<dbReference type="EMBL" id="CP001663">
    <property type="protein sequence ID" value="AFP41987.1"/>
    <property type="molecule type" value="Genomic_DNA"/>
</dbReference>
<dbReference type="RefSeq" id="WP_011730719.1">
    <property type="nucleotide sequence ID" value="NZ_SIJM01000007.1"/>
</dbReference>
<dbReference type="RefSeq" id="YP_889931.1">
    <property type="nucleotide sequence ID" value="NC_008596.1"/>
</dbReference>
<dbReference type="SMR" id="A0R443"/>
<dbReference type="STRING" id="246196.MSMEG_5698"/>
<dbReference type="PaxDb" id="246196-MSMEI_5547"/>
<dbReference type="GeneID" id="93460340"/>
<dbReference type="KEGG" id="msb:LJ00_28170"/>
<dbReference type="KEGG" id="msg:MSMEI_5547"/>
<dbReference type="KEGG" id="msm:MSMEG_5698"/>
<dbReference type="PATRIC" id="fig|246196.19.peg.5553"/>
<dbReference type="eggNOG" id="COG2896">
    <property type="taxonomic scope" value="Bacteria"/>
</dbReference>
<dbReference type="OrthoDB" id="9763993at2"/>
<dbReference type="UniPathway" id="UPA00344"/>
<dbReference type="Proteomes" id="UP000000757">
    <property type="component" value="Chromosome"/>
</dbReference>
<dbReference type="Proteomes" id="UP000006158">
    <property type="component" value="Chromosome"/>
</dbReference>
<dbReference type="GO" id="GO:0051539">
    <property type="term" value="F:4 iron, 4 sulfur cluster binding"/>
    <property type="evidence" value="ECO:0007669"/>
    <property type="project" value="UniProtKB-UniRule"/>
</dbReference>
<dbReference type="GO" id="GO:0061799">
    <property type="term" value="F:cyclic pyranopterin monophosphate synthase activity"/>
    <property type="evidence" value="ECO:0007669"/>
    <property type="project" value="TreeGrafter"/>
</dbReference>
<dbReference type="GO" id="GO:0061798">
    <property type="term" value="F:GTP 3',8'-cyclase activity"/>
    <property type="evidence" value="ECO:0007669"/>
    <property type="project" value="UniProtKB-UniRule"/>
</dbReference>
<dbReference type="GO" id="GO:0005525">
    <property type="term" value="F:GTP binding"/>
    <property type="evidence" value="ECO:0007669"/>
    <property type="project" value="UniProtKB-UniRule"/>
</dbReference>
<dbReference type="GO" id="GO:0046872">
    <property type="term" value="F:metal ion binding"/>
    <property type="evidence" value="ECO:0007669"/>
    <property type="project" value="UniProtKB-KW"/>
</dbReference>
<dbReference type="GO" id="GO:1904047">
    <property type="term" value="F:S-adenosyl-L-methionine binding"/>
    <property type="evidence" value="ECO:0007669"/>
    <property type="project" value="UniProtKB-UniRule"/>
</dbReference>
<dbReference type="GO" id="GO:0006777">
    <property type="term" value="P:Mo-molybdopterin cofactor biosynthetic process"/>
    <property type="evidence" value="ECO:0007669"/>
    <property type="project" value="UniProtKB-UniRule"/>
</dbReference>
<dbReference type="CDD" id="cd01335">
    <property type="entry name" value="Radical_SAM"/>
    <property type="match status" value="1"/>
</dbReference>
<dbReference type="CDD" id="cd21117">
    <property type="entry name" value="Twitch_MoaA"/>
    <property type="match status" value="1"/>
</dbReference>
<dbReference type="Gene3D" id="3.20.20.70">
    <property type="entry name" value="Aldolase class I"/>
    <property type="match status" value="1"/>
</dbReference>
<dbReference type="HAMAP" id="MF_01225_B">
    <property type="entry name" value="MoaA_B"/>
    <property type="match status" value="1"/>
</dbReference>
<dbReference type="InterPro" id="IPR013785">
    <property type="entry name" value="Aldolase_TIM"/>
</dbReference>
<dbReference type="InterPro" id="IPR006638">
    <property type="entry name" value="Elp3/MiaA/NifB-like_rSAM"/>
</dbReference>
<dbReference type="InterPro" id="IPR013483">
    <property type="entry name" value="MoaA"/>
</dbReference>
<dbReference type="InterPro" id="IPR000385">
    <property type="entry name" value="MoaA_NifB_PqqE_Fe-S-bd_CS"/>
</dbReference>
<dbReference type="InterPro" id="IPR010505">
    <property type="entry name" value="MoaA_twitch"/>
</dbReference>
<dbReference type="InterPro" id="IPR050105">
    <property type="entry name" value="MoCo_biosynth_MoaA/MoaC"/>
</dbReference>
<dbReference type="InterPro" id="IPR007197">
    <property type="entry name" value="rSAM"/>
</dbReference>
<dbReference type="NCBIfam" id="TIGR02666">
    <property type="entry name" value="moaA"/>
    <property type="match status" value="1"/>
</dbReference>
<dbReference type="PANTHER" id="PTHR22960:SF0">
    <property type="entry name" value="MOLYBDENUM COFACTOR BIOSYNTHESIS PROTEIN 1"/>
    <property type="match status" value="1"/>
</dbReference>
<dbReference type="PANTHER" id="PTHR22960">
    <property type="entry name" value="MOLYBDOPTERIN COFACTOR SYNTHESIS PROTEIN A"/>
    <property type="match status" value="1"/>
</dbReference>
<dbReference type="Pfam" id="PF06463">
    <property type="entry name" value="Mob_synth_C"/>
    <property type="match status" value="1"/>
</dbReference>
<dbReference type="Pfam" id="PF04055">
    <property type="entry name" value="Radical_SAM"/>
    <property type="match status" value="1"/>
</dbReference>
<dbReference type="SFLD" id="SFLDG01383">
    <property type="entry name" value="cyclic_pyranopterin_phosphate"/>
    <property type="match status" value="1"/>
</dbReference>
<dbReference type="SFLD" id="SFLDG01072">
    <property type="entry name" value="dehydrogenase_like"/>
    <property type="match status" value="1"/>
</dbReference>
<dbReference type="SMART" id="SM00729">
    <property type="entry name" value="Elp3"/>
    <property type="match status" value="1"/>
</dbReference>
<dbReference type="SUPFAM" id="SSF102114">
    <property type="entry name" value="Radical SAM enzymes"/>
    <property type="match status" value="1"/>
</dbReference>
<dbReference type="PROSITE" id="PS01305">
    <property type="entry name" value="MOAA_NIFB_PQQE"/>
    <property type="match status" value="1"/>
</dbReference>
<dbReference type="PROSITE" id="PS51918">
    <property type="entry name" value="RADICAL_SAM"/>
    <property type="match status" value="1"/>
</dbReference>
<evidence type="ECO:0000255" key="1">
    <source>
        <dbReference type="HAMAP-Rule" id="MF_01225"/>
    </source>
</evidence>
<evidence type="ECO:0000255" key="2">
    <source>
        <dbReference type="PROSITE-ProRule" id="PRU01266"/>
    </source>
</evidence>
<evidence type="ECO:0000256" key="3">
    <source>
        <dbReference type="SAM" id="MobiDB-lite"/>
    </source>
</evidence>
<proteinExistence type="inferred from homology"/>